<reference key="1">
    <citation type="journal article" date="2002" name="Nucleic Acids Res.">
        <title>Genome sequence of Shigella flexneri 2a: insights into pathogenicity through comparison with genomes of Escherichia coli K12 and O157.</title>
        <authorList>
            <person name="Jin Q."/>
            <person name="Yuan Z."/>
            <person name="Xu J."/>
            <person name="Wang Y."/>
            <person name="Shen Y."/>
            <person name="Lu W."/>
            <person name="Wang J."/>
            <person name="Liu H."/>
            <person name="Yang J."/>
            <person name="Yang F."/>
            <person name="Zhang X."/>
            <person name="Zhang J."/>
            <person name="Yang G."/>
            <person name="Wu H."/>
            <person name="Qu D."/>
            <person name="Dong J."/>
            <person name="Sun L."/>
            <person name="Xue Y."/>
            <person name="Zhao A."/>
            <person name="Gao Y."/>
            <person name="Zhu J."/>
            <person name="Kan B."/>
            <person name="Ding K."/>
            <person name="Chen S."/>
            <person name="Cheng H."/>
            <person name="Yao Z."/>
            <person name="He B."/>
            <person name="Chen R."/>
            <person name="Ma D."/>
            <person name="Qiang B."/>
            <person name="Wen Y."/>
            <person name="Hou Y."/>
            <person name="Yu J."/>
        </authorList>
    </citation>
    <scope>NUCLEOTIDE SEQUENCE [LARGE SCALE GENOMIC DNA]</scope>
    <source>
        <strain>301 / Serotype 2a</strain>
    </source>
</reference>
<reference key="2">
    <citation type="journal article" date="2003" name="Infect. Immun.">
        <title>Complete genome sequence and comparative genomics of Shigella flexneri serotype 2a strain 2457T.</title>
        <authorList>
            <person name="Wei J."/>
            <person name="Goldberg M.B."/>
            <person name="Burland V."/>
            <person name="Venkatesan M.M."/>
            <person name="Deng W."/>
            <person name="Fournier G."/>
            <person name="Mayhew G.F."/>
            <person name="Plunkett G. III"/>
            <person name="Rose D.J."/>
            <person name="Darling A."/>
            <person name="Mau B."/>
            <person name="Perna N.T."/>
            <person name="Payne S.M."/>
            <person name="Runyen-Janecky L.J."/>
            <person name="Zhou S."/>
            <person name="Schwartz D.C."/>
            <person name="Blattner F.R."/>
        </authorList>
    </citation>
    <scope>NUCLEOTIDE SEQUENCE [LARGE SCALE GENOMIC DNA]</scope>
    <source>
        <strain>ATCC 700930 / 2457T / Serotype 2a</strain>
    </source>
</reference>
<keyword id="KW-0456">Lyase</keyword>
<keyword id="KW-0460">Magnesium</keyword>
<keyword id="KW-0474">Menaquinone biosynthesis</keyword>
<keyword id="KW-0479">Metal-binding</keyword>
<keyword id="KW-1185">Reference proteome</keyword>
<accession>Q83QT6</accession>
<accession>Q7C0R1</accession>
<sequence length="320" mass="35495">MRSAQVYRWQIPMDAGVVLRDRRLKTRDGLYVCLREGEREGWGEISPLPGFSQENWEEAQSVLLAWVNNWLAGDCELPQMPSVAFGVSCALAELTDTLPQAANYRAAPLCNGDPDDLILKLADMPGEKVAKVKVGLYEAVRDGMVVNLLLEAIPDLHLRLDANRAWTPLKGQQFAKYVNPDYRHRIAFLEEPCKTRDDSRAFARETGIAIAWDESLREPDFAFVAEEGVRAVVIKPTLTGSLEKVREQVQAAHALGLTAVISSSIESSLGLTQLARIAAWLTPDTIPGLDTLDLMQAQQVRRWPGSPLPLVDADVQEQLL</sequence>
<evidence type="ECO:0000255" key="1">
    <source>
        <dbReference type="HAMAP-Rule" id="MF_00470"/>
    </source>
</evidence>
<dbReference type="EC" id="4.2.1.113" evidence="1"/>
<dbReference type="EMBL" id="AE005674">
    <property type="protein sequence ID" value="AAN43854.1"/>
    <property type="molecule type" value="Genomic_DNA"/>
</dbReference>
<dbReference type="EMBL" id="AE014073">
    <property type="protein sequence ID" value="AAP17673.1"/>
    <property type="molecule type" value="Genomic_DNA"/>
</dbReference>
<dbReference type="RefSeq" id="NP_708147.1">
    <property type="nucleotide sequence ID" value="NC_004337.2"/>
</dbReference>
<dbReference type="RefSeq" id="WP_001255584.1">
    <property type="nucleotide sequence ID" value="NZ_WPGW01000032.1"/>
</dbReference>
<dbReference type="SMR" id="Q83QT6"/>
<dbReference type="STRING" id="198214.SF2340"/>
<dbReference type="PaxDb" id="198214-SF2340"/>
<dbReference type="GeneID" id="1025521"/>
<dbReference type="KEGG" id="sfl:SF2340"/>
<dbReference type="KEGG" id="sfx:S2474"/>
<dbReference type="PATRIC" id="fig|198214.7.peg.2804"/>
<dbReference type="HOGENOM" id="CLU_030273_0_1_6"/>
<dbReference type="UniPathway" id="UPA00079"/>
<dbReference type="UniPathway" id="UPA01057">
    <property type="reaction ID" value="UER00165"/>
</dbReference>
<dbReference type="Proteomes" id="UP000001006">
    <property type="component" value="Chromosome"/>
</dbReference>
<dbReference type="Proteomes" id="UP000002673">
    <property type="component" value="Chromosome"/>
</dbReference>
<dbReference type="GO" id="GO:0000287">
    <property type="term" value="F:magnesium ion binding"/>
    <property type="evidence" value="ECO:0007669"/>
    <property type="project" value="UniProtKB-UniRule"/>
</dbReference>
<dbReference type="GO" id="GO:0043748">
    <property type="term" value="F:O-succinylbenzoate synthase activity"/>
    <property type="evidence" value="ECO:0007669"/>
    <property type="project" value="UniProtKB-EC"/>
</dbReference>
<dbReference type="GO" id="GO:0009234">
    <property type="term" value="P:menaquinone biosynthetic process"/>
    <property type="evidence" value="ECO:0007669"/>
    <property type="project" value="UniProtKB-UniRule"/>
</dbReference>
<dbReference type="CDD" id="cd03320">
    <property type="entry name" value="OSBS"/>
    <property type="match status" value="1"/>
</dbReference>
<dbReference type="FunFam" id="3.20.20.120:FF:000006">
    <property type="entry name" value="o-succinylbenzoate synthase"/>
    <property type="match status" value="1"/>
</dbReference>
<dbReference type="FunFam" id="3.30.390.10:FF:000005">
    <property type="entry name" value="o-succinylbenzoate synthase"/>
    <property type="match status" value="1"/>
</dbReference>
<dbReference type="Gene3D" id="3.20.20.120">
    <property type="entry name" value="Enolase-like C-terminal domain"/>
    <property type="match status" value="1"/>
</dbReference>
<dbReference type="Gene3D" id="3.30.390.10">
    <property type="entry name" value="Enolase-like, N-terminal domain"/>
    <property type="match status" value="1"/>
</dbReference>
<dbReference type="HAMAP" id="MF_00470">
    <property type="entry name" value="MenC_1"/>
    <property type="match status" value="1"/>
</dbReference>
<dbReference type="InterPro" id="IPR036849">
    <property type="entry name" value="Enolase-like_C_sf"/>
</dbReference>
<dbReference type="InterPro" id="IPR029017">
    <property type="entry name" value="Enolase-like_N"/>
</dbReference>
<dbReference type="InterPro" id="IPR029065">
    <property type="entry name" value="Enolase_C-like"/>
</dbReference>
<dbReference type="InterPro" id="IPR013342">
    <property type="entry name" value="Mandelate_racemase_C"/>
</dbReference>
<dbReference type="InterPro" id="IPR010196">
    <property type="entry name" value="OSB_synthase_MenC1"/>
</dbReference>
<dbReference type="InterPro" id="IPR041338">
    <property type="entry name" value="OSBS_N"/>
</dbReference>
<dbReference type="NCBIfam" id="TIGR01927">
    <property type="entry name" value="menC_gam_Gplu"/>
    <property type="match status" value="1"/>
</dbReference>
<dbReference type="NCBIfam" id="NF003473">
    <property type="entry name" value="PRK05105.1"/>
    <property type="match status" value="1"/>
</dbReference>
<dbReference type="PANTHER" id="PTHR48073:SF2">
    <property type="entry name" value="O-SUCCINYLBENZOATE SYNTHASE"/>
    <property type="match status" value="1"/>
</dbReference>
<dbReference type="PANTHER" id="PTHR48073">
    <property type="entry name" value="O-SUCCINYLBENZOATE SYNTHASE-RELATED"/>
    <property type="match status" value="1"/>
</dbReference>
<dbReference type="Pfam" id="PF21508">
    <property type="entry name" value="MenC_N"/>
    <property type="match status" value="1"/>
</dbReference>
<dbReference type="Pfam" id="PF13378">
    <property type="entry name" value="MR_MLE_C"/>
    <property type="match status" value="1"/>
</dbReference>
<dbReference type="SFLD" id="SFLDG00180">
    <property type="entry name" value="muconate_cycloisomerase"/>
    <property type="match status" value="1"/>
</dbReference>
<dbReference type="SFLD" id="SFLDF00009">
    <property type="entry name" value="o-succinylbenzoate_synthase"/>
    <property type="match status" value="1"/>
</dbReference>
<dbReference type="SMART" id="SM00922">
    <property type="entry name" value="MR_MLE"/>
    <property type="match status" value="1"/>
</dbReference>
<dbReference type="SUPFAM" id="SSF51604">
    <property type="entry name" value="Enolase C-terminal domain-like"/>
    <property type="match status" value="1"/>
</dbReference>
<dbReference type="SUPFAM" id="SSF54826">
    <property type="entry name" value="Enolase N-terminal domain-like"/>
    <property type="match status" value="1"/>
</dbReference>
<protein>
    <recommendedName>
        <fullName evidence="1">o-succinylbenzoate synthase</fullName>
        <shortName evidence="1">OSB synthase</shortName>
        <shortName evidence="1">OSBS</shortName>
        <ecNumber evidence="1">4.2.1.113</ecNumber>
    </recommendedName>
    <alternativeName>
        <fullName evidence="1">4-(2'-carboxyphenyl)-4-oxybutyric acid synthase</fullName>
    </alternativeName>
    <alternativeName>
        <fullName evidence="1">o-succinylbenzoic acid synthase</fullName>
    </alternativeName>
</protein>
<proteinExistence type="inferred from homology"/>
<organism>
    <name type="scientific">Shigella flexneri</name>
    <dbReference type="NCBI Taxonomy" id="623"/>
    <lineage>
        <taxon>Bacteria</taxon>
        <taxon>Pseudomonadati</taxon>
        <taxon>Pseudomonadota</taxon>
        <taxon>Gammaproteobacteria</taxon>
        <taxon>Enterobacterales</taxon>
        <taxon>Enterobacteriaceae</taxon>
        <taxon>Shigella</taxon>
    </lineage>
</organism>
<feature type="chain" id="PRO_1000013813" description="o-succinylbenzoate synthase">
    <location>
        <begin position="1"/>
        <end position="320"/>
    </location>
</feature>
<feature type="active site" description="Proton donor" evidence="1">
    <location>
        <position position="133"/>
    </location>
</feature>
<feature type="active site" description="Proton acceptor" evidence="1">
    <location>
        <position position="235"/>
    </location>
</feature>
<feature type="binding site" evidence="1">
    <location>
        <position position="161"/>
    </location>
    <ligand>
        <name>Mg(2+)</name>
        <dbReference type="ChEBI" id="CHEBI:18420"/>
    </ligand>
</feature>
<feature type="binding site" evidence="1">
    <location>
        <position position="190"/>
    </location>
    <ligand>
        <name>Mg(2+)</name>
        <dbReference type="ChEBI" id="CHEBI:18420"/>
    </ligand>
</feature>
<feature type="binding site" evidence="1">
    <location>
        <position position="213"/>
    </location>
    <ligand>
        <name>Mg(2+)</name>
        <dbReference type="ChEBI" id="CHEBI:18420"/>
    </ligand>
</feature>
<comment type="function">
    <text evidence="1">Converts 2-succinyl-6-hydroxy-2,4-cyclohexadiene-1-carboxylate (SHCHC) to 2-succinylbenzoate (OSB).</text>
</comment>
<comment type="catalytic activity">
    <reaction evidence="1">
        <text>(1R,6R)-6-hydroxy-2-succinyl-cyclohexa-2,4-diene-1-carboxylate = 2-succinylbenzoate + H2O</text>
        <dbReference type="Rhea" id="RHEA:10196"/>
        <dbReference type="ChEBI" id="CHEBI:15377"/>
        <dbReference type="ChEBI" id="CHEBI:18325"/>
        <dbReference type="ChEBI" id="CHEBI:58689"/>
        <dbReference type="EC" id="4.2.1.113"/>
    </reaction>
</comment>
<comment type="cofactor">
    <cofactor evidence="1">
        <name>a divalent metal cation</name>
        <dbReference type="ChEBI" id="CHEBI:60240"/>
    </cofactor>
</comment>
<comment type="pathway">
    <text evidence="1">Quinol/quinone metabolism; 1,4-dihydroxy-2-naphthoate biosynthesis; 1,4-dihydroxy-2-naphthoate from chorismate: step 4/7.</text>
</comment>
<comment type="pathway">
    <text evidence="1">Quinol/quinone metabolism; menaquinone biosynthesis.</text>
</comment>
<comment type="similarity">
    <text evidence="1">Belongs to the mandelate racemase/muconate lactonizing enzyme family. MenC type 1 subfamily.</text>
</comment>
<gene>
    <name evidence="1" type="primary">menC</name>
    <name type="ordered locus">SF2340</name>
    <name type="ordered locus">S2474</name>
</gene>
<name>MENC_SHIFL</name>